<evidence type="ECO:0000255" key="1">
    <source>
        <dbReference type="HAMAP-Rule" id="MF_01365"/>
    </source>
</evidence>
<evidence type="ECO:0000305" key="2"/>
<feature type="chain" id="PRO_1000144060" description="Large ribosomal subunit protein uL6">
    <location>
        <begin position="1"/>
        <end position="184"/>
    </location>
</feature>
<comment type="function">
    <text evidence="1">This protein binds to the 23S rRNA, and is important in its secondary structure. It is located near the subunit interface in the base of the L7/L12 stalk, and near the tRNA binding site of the peptidyltransferase center.</text>
</comment>
<comment type="subunit">
    <text evidence="1">Part of the 50S ribosomal subunit.</text>
</comment>
<comment type="similarity">
    <text evidence="1">Belongs to the universal ribosomal protein uL6 family.</text>
</comment>
<sequence>MSRIANKPIVIPNGVEVKVEGNVLKVKGPLGELKQDFLPYVKVEINGNEMNVKPNVDYMKRRSDLKKMKMFTGTYWRLFNNMVIGVTKGFKKELEIVGIGYRAQLQGKKLVMNLGYAHPVEMEIPSDVKVEVPSPNKIIVSGIDKQRVGQVAADIRKWREPNVYSGKGIRYVGEVVRLKEGKKA</sequence>
<proteinExistence type="inferred from homology"/>
<name>RL6_THEAB</name>
<gene>
    <name evidence="1" type="primary">rplF</name>
    <name type="ordered locus">THA_1230</name>
</gene>
<reference key="1">
    <citation type="journal article" date="2009" name="J. Bacteriol.">
        <title>The genome of Thermosipho africanus TCF52B: lateral genetic connections to the Firmicutes and Archaea.</title>
        <authorList>
            <person name="Nesboe C.L."/>
            <person name="Bapteste E."/>
            <person name="Curtis B."/>
            <person name="Dahle H."/>
            <person name="Lopez P."/>
            <person name="Macleod D."/>
            <person name="Dlutek M."/>
            <person name="Bowman S."/>
            <person name="Zhaxybayeva O."/>
            <person name="Birkeland N.-K."/>
            <person name="Doolittle W.F."/>
        </authorList>
    </citation>
    <scope>NUCLEOTIDE SEQUENCE [LARGE SCALE GENOMIC DNA]</scope>
    <source>
        <strain>TCF52B</strain>
    </source>
</reference>
<organism>
    <name type="scientific">Thermosipho africanus (strain TCF52B)</name>
    <dbReference type="NCBI Taxonomy" id="484019"/>
    <lineage>
        <taxon>Bacteria</taxon>
        <taxon>Thermotogati</taxon>
        <taxon>Thermotogota</taxon>
        <taxon>Thermotogae</taxon>
        <taxon>Thermotogales</taxon>
        <taxon>Fervidobacteriaceae</taxon>
        <taxon>Thermosipho</taxon>
    </lineage>
</organism>
<accession>B7IHW1</accession>
<dbReference type="EMBL" id="CP001185">
    <property type="protein sequence ID" value="ACJ75675.1"/>
    <property type="molecule type" value="Genomic_DNA"/>
</dbReference>
<dbReference type="RefSeq" id="WP_004101466.1">
    <property type="nucleotide sequence ID" value="NC_011653.1"/>
</dbReference>
<dbReference type="SMR" id="B7IHW1"/>
<dbReference type="STRING" id="484019.THA_1230"/>
<dbReference type="KEGG" id="taf:THA_1230"/>
<dbReference type="eggNOG" id="COG0097">
    <property type="taxonomic scope" value="Bacteria"/>
</dbReference>
<dbReference type="HOGENOM" id="CLU_065464_1_2_0"/>
<dbReference type="OrthoDB" id="9805007at2"/>
<dbReference type="Proteomes" id="UP000002453">
    <property type="component" value="Chromosome"/>
</dbReference>
<dbReference type="GO" id="GO:0022625">
    <property type="term" value="C:cytosolic large ribosomal subunit"/>
    <property type="evidence" value="ECO:0007669"/>
    <property type="project" value="TreeGrafter"/>
</dbReference>
<dbReference type="GO" id="GO:0019843">
    <property type="term" value="F:rRNA binding"/>
    <property type="evidence" value="ECO:0007669"/>
    <property type="project" value="UniProtKB-UniRule"/>
</dbReference>
<dbReference type="GO" id="GO:0003735">
    <property type="term" value="F:structural constituent of ribosome"/>
    <property type="evidence" value="ECO:0007669"/>
    <property type="project" value="InterPro"/>
</dbReference>
<dbReference type="GO" id="GO:0002181">
    <property type="term" value="P:cytoplasmic translation"/>
    <property type="evidence" value="ECO:0007669"/>
    <property type="project" value="TreeGrafter"/>
</dbReference>
<dbReference type="FunFam" id="3.90.930.12:FF:000001">
    <property type="entry name" value="50S ribosomal protein L6"/>
    <property type="match status" value="1"/>
</dbReference>
<dbReference type="FunFam" id="3.90.930.12:FF:000002">
    <property type="entry name" value="50S ribosomal protein L6"/>
    <property type="match status" value="1"/>
</dbReference>
<dbReference type="Gene3D" id="3.90.930.12">
    <property type="entry name" value="Ribosomal protein L6, alpha-beta domain"/>
    <property type="match status" value="2"/>
</dbReference>
<dbReference type="HAMAP" id="MF_01365_B">
    <property type="entry name" value="Ribosomal_uL6_B"/>
    <property type="match status" value="1"/>
</dbReference>
<dbReference type="InterPro" id="IPR000702">
    <property type="entry name" value="Ribosomal_uL6-like"/>
</dbReference>
<dbReference type="InterPro" id="IPR036789">
    <property type="entry name" value="Ribosomal_uL6-like_a/b-dom_sf"/>
</dbReference>
<dbReference type="InterPro" id="IPR020040">
    <property type="entry name" value="Ribosomal_uL6_a/b-dom"/>
</dbReference>
<dbReference type="InterPro" id="IPR019906">
    <property type="entry name" value="Ribosomal_uL6_bac-type"/>
</dbReference>
<dbReference type="NCBIfam" id="TIGR03654">
    <property type="entry name" value="L6_bact"/>
    <property type="match status" value="1"/>
</dbReference>
<dbReference type="PANTHER" id="PTHR11655">
    <property type="entry name" value="60S/50S RIBOSOMAL PROTEIN L6/L9"/>
    <property type="match status" value="1"/>
</dbReference>
<dbReference type="PANTHER" id="PTHR11655:SF14">
    <property type="entry name" value="LARGE RIBOSOMAL SUBUNIT PROTEIN UL6M"/>
    <property type="match status" value="1"/>
</dbReference>
<dbReference type="Pfam" id="PF00347">
    <property type="entry name" value="Ribosomal_L6"/>
    <property type="match status" value="2"/>
</dbReference>
<dbReference type="PIRSF" id="PIRSF002162">
    <property type="entry name" value="Ribosomal_L6"/>
    <property type="match status" value="1"/>
</dbReference>
<dbReference type="PRINTS" id="PR00059">
    <property type="entry name" value="RIBOSOMALL6"/>
</dbReference>
<dbReference type="SUPFAM" id="SSF56053">
    <property type="entry name" value="Ribosomal protein L6"/>
    <property type="match status" value="2"/>
</dbReference>
<protein>
    <recommendedName>
        <fullName evidence="1">Large ribosomal subunit protein uL6</fullName>
    </recommendedName>
    <alternativeName>
        <fullName evidence="2">50S ribosomal protein L6</fullName>
    </alternativeName>
</protein>
<keyword id="KW-1185">Reference proteome</keyword>
<keyword id="KW-0687">Ribonucleoprotein</keyword>
<keyword id="KW-0689">Ribosomal protein</keyword>
<keyword id="KW-0694">RNA-binding</keyword>
<keyword id="KW-0699">rRNA-binding</keyword>